<comment type="function">
    <text evidence="1">Protein S19 forms a complex with S13 that binds strongly to the 16S ribosomal RNA.</text>
</comment>
<comment type="similarity">
    <text evidence="1">Belongs to the universal ribosomal protein uS19 family.</text>
</comment>
<comment type="sequence caution" evidence="2">
    <conflict type="erroneous initiation">
        <sequence resource="EMBL-CDS" id="AFP37877"/>
    </conflict>
    <text>Truncated N-terminus.</text>
</comment>
<protein>
    <recommendedName>
        <fullName evidence="1">Small ribosomal subunit protein uS19</fullName>
    </recommendedName>
    <alternativeName>
        <fullName evidence="2">30S ribosomal protein S19</fullName>
    </alternativeName>
</protein>
<feature type="chain" id="PRO_1000051079" description="Small ribosomal subunit protein uS19">
    <location>
        <begin position="1"/>
        <end position="93"/>
    </location>
</feature>
<feature type="strand" evidence="3">
    <location>
        <begin position="6"/>
        <end position="8"/>
    </location>
</feature>
<feature type="helix" evidence="3">
    <location>
        <begin position="13"/>
        <end position="25"/>
    </location>
</feature>
<feature type="strand" evidence="3">
    <location>
        <begin position="29"/>
        <end position="33"/>
    </location>
</feature>
<feature type="strand" evidence="3">
    <location>
        <begin position="44"/>
        <end position="46"/>
    </location>
</feature>
<feature type="strand" evidence="3">
    <location>
        <begin position="48"/>
        <end position="52"/>
    </location>
</feature>
<feature type="strand" evidence="3">
    <location>
        <begin position="54"/>
        <end position="61"/>
    </location>
</feature>
<feature type="helix" evidence="3">
    <location>
        <begin position="64"/>
        <end position="66"/>
    </location>
</feature>
<feature type="strand" evidence="3">
    <location>
        <begin position="67"/>
        <end position="70"/>
    </location>
</feature>
<feature type="helix" evidence="3">
    <location>
        <begin position="71"/>
        <end position="74"/>
    </location>
</feature>
<dbReference type="EMBL" id="CP000480">
    <property type="protein sequence ID" value="ABK73644.1"/>
    <property type="molecule type" value="Genomic_DNA"/>
</dbReference>
<dbReference type="EMBL" id="CP001663">
    <property type="protein sequence ID" value="AFP37877.1"/>
    <property type="status" value="ALT_INIT"/>
    <property type="molecule type" value="Genomic_DNA"/>
</dbReference>
<dbReference type="RefSeq" id="WP_003892827.1">
    <property type="nucleotide sequence ID" value="NZ_SIJM01000016.1"/>
</dbReference>
<dbReference type="RefSeq" id="YP_885823.1">
    <property type="nucleotide sequence ID" value="NC_008596.1"/>
</dbReference>
<dbReference type="PDB" id="5O5J">
    <property type="method" value="EM"/>
    <property type="resolution" value="3.45 A"/>
    <property type="chains" value="S=1-93"/>
</dbReference>
<dbReference type="PDB" id="5O61">
    <property type="method" value="EM"/>
    <property type="resolution" value="3.31 A"/>
    <property type="chains" value="BS=1-93"/>
</dbReference>
<dbReference type="PDB" id="5XYU">
    <property type="method" value="EM"/>
    <property type="resolution" value="3.45 A"/>
    <property type="chains" value="S=1-93"/>
</dbReference>
<dbReference type="PDB" id="5ZEB">
    <property type="method" value="EM"/>
    <property type="resolution" value="3.40 A"/>
    <property type="chains" value="s=1-93"/>
</dbReference>
<dbReference type="PDB" id="5ZEP">
    <property type="method" value="EM"/>
    <property type="resolution" value="3.40 A"/>
    <property type="chains" value="s=1-93"/>
</dbReference>
<dbReference type="PDB" id="5ZEU">
    <property type="method" value="EM"/>
    <property type="resolution" value="3.70 A"/>
    <property type="chains" value="s=1-93"/>
</dbReference>
<dbReference type="PDB" id="6DZI">
    <property type="method" value="EM"/>
    <property type="resolution" value="3.46 A"/>
    <property type="chains" value="6=2-83"/>
</dbReference>
<dbReference type="PDB" id="6DZK">
    <property type="method" value="EM"/>
    <property type="resolution" value="3.60 A"/>
    <property type="chains" value="S=1-93"/>
</dbReference>
<dbReference type="PDB" id="8FR8">
    <property type="method" value="EM"/>
    <property type="resolution" value="2.76 A"/>
    <property type="chains" value="d=2-83"/>
</dbReference>
<dbReference type="PDB" id="8V9J">
    <property type="method" value="EM"/>
    <property type="resolution" value="3.10 A"/>
    <property type="chains" value="s=1-93"/>
</dbReference>
<dbReference type="PDB" id="8V9K">
    <property type="method" value="EM"/>
    <property type="resolution" value="3.10 A"/>
    <property type="chains" value="s=1-93"/>
</dbReference>
<dbReference type="PDB" id="8V9L">
    <property type="method" value="EM"/>
    <property type="resolution" value="3.00 A"/>
    <property type="chains" value="s=1-93"/>
</dbReference>
<dbReference type="PDB" id="8VIO">
    <property type="method" value="EM"/>
    <property type="resolution" value="3.26 A"/>
    <property type="chains" value="y=1-93"/>
</dbReference>
<dbReference type="PDB" id="8WHX">
    <property type="method" value="EM"/>
    <property type="resolution" value="2.80 A"/>
    <property type="chains" value="t=1-93"/>
</dbReference>
<dbReference type="PDB" id="8WI7">
    <property type="method" value="EM"/>
    <property type="resolution" value="3.50 A"/>
    <property type="chains" value="t=1-93"/>
</dbReference>
<dbReference type="PDB" id="8WI9">
    <property type="method" value="EM"/>
    <property type="resolution" value="3.50 A"/>
    <property type="chains" value="t=1-93"/>
</dbReference>
<dbReference type="PDB" id="8WIB">
    <property type="method" value="EM"/>
    <property type="resolution" value="3.50 A"/>
    <property type="chains" value="t=1-93"/>
</dbReference>
<dbReference type="PDB" id="8WID">
    <property type="method" value="EM"/>
    <property type="resolution" value="3.50 A"/>
    <property type="chains" value="t=1-93"/>
</dbReference>
<dbReference type="PDB" id="8WIF">
    <property type="method" value="EM"/>
    <property type="resolution" value="2.90 A"/>
    <property type="chains" value="t=1-93"/>
</dbReference>
<dbReference type="PDBsum" id="5O5J"/>
<dbReference type="PDBsum" id="5O61"/>
<dbReference type="PDBsum" id="5XYU"/>
<dbReference type="PDBsum" id="5ZEB"/>
<dbReference type="PDBsum" id="5ZEP"/>
<dbReference type="PDBsum" id="5ZEU"/>
<dbReference type="PDBsum" id="6DZI"/>
<dbReference type="PDBsum" id="6DZK"/>
<dbReference type="PDBsum" id="8FR8"/>
<dbReference type="PDBsum" id="8V9J"/>
<dbReference type="PDBsum" id="8V9K"/>
<dbReference type="PDBsum" id="8V9L"/>
<dbReference type="PDBsum" id="8VIO"/>
<dbReference type="PDBsum" id="8WHX"/>
<dbReference type="PDBsum" id="8WI7"/>
<dbReference type="PDBsum" id="8WI9"/>
<dbReference type="PDBsum" id="8WIB"/>
<dbReference type="PDBsum" id="8WID"/>
<dbReference type="PDBsum" id="8WIF"/>
<dbReference type="EMDB" id="EMD-29397"/>
<dbReference type="EMDB" id="EMD-3748"/>
<dbReference type="EMDB" id="EMD-3751"/>
<dbReference type="EMDB" id="EMD-37551"/>
<dbReference type="EMDB" id="EMD-37559"/>
<dbReference type="EMDB" id="EMD-37561"/>
<dbReference type="EMDB" id="EMD-37562"/>
<dbReference type="EMDB" id="EMD-37564"/>
<dbReference type="EMDB" id="EMD-37565"/>
<dbReference type="EMDB" id="EMD-43074"/>
<dbReference type="EMDB" id="EMD-43075"/>
<dbReference type="EMDB" id="EMD-43076"/>
<dbReference type="EMDB" id="EMD-43267"/>
<dbReference type="EMDB" id="EMD-6790"/>
<dbReference type="EMDB" id="EMD-6920"/>
<dbReference type="EMDB" id="EMD-6921"/>
<dbReference type="EMDB" id="EMD-6923"/>
<dbReference type="EMDB" id="EMD-8932"/>
<dbReference type="EMDB" id="EMD-8934"/>
<dbReference type="SMR" id="A0QSD5"/>
<dbReference type="IntAct" id="A0QSD5">
    <property type="interactions" value="1"/>
</dbReference>
<dbReference type="STRING" id="246196.MSMEG_1440"/>
<dbReference type="PaxDb" id="246196-MSMEI_1404"/>
<dbReference type="GeneID" id="93456284"/>
<dbReference type="KEGG" id="msb:LJ00_07185"/>
<dbReference type="KEGG" id="msg:MSMEI_1404"/>
<dbReference type="KEGG" id="msm:MSMEG_1440"/>
<dbReference type="PATRIC" id="fig|246196.19.peg.1426"/>
<dbReference type="eggNOG" id="COG0185">
    <property type="taxonomic scope" value="Bacteria"/>
</dbReference>
<dbReference type="OrthoDB" id="9797833at2"/>
<dbReference type="Proteomes" id="UP000000757">
    <property type="component" value="Chromosome"/>
</dbReference>
<dbReference type="Proteomes" id="UP000006158">
    <property type="component" value="Chromosome"/>
</dbReference>
<dbReference type="GO" id="GO:0005737">
    <property type="term" value="C:cytoplasm"/>
    <property type="evidence" value="ECO:0007669"/>
    <property type="project" value="UniProtKB-ARBA"/>
</dbReference>
<dbReference type="GO" id="GO:0015935">
    <property type="term" value="C:small ribosomal subunit"/>
    <property type="evidence" value="ECO:0007669"/>
    <property type="project" value="InterPro"/>
</dbReference>
<dbReference type="GO" id="GO:0019843">
    <property type="term" value="F:rRNA binding"/>
    <property type="evidence" value="ECO:0007669"/>
    <property type="project" value="UniProtKB-UniRule"/>
</dbReference>
<dbReference type="GO" id="GO:0003735">
    <property type="term" value="F:structural constituent of ribosome"/>
    <property type="evidence" value="ECO:0007669"/>
    <property type="project" value="InterPro"/>
</dbReference>
<dbReference type="GO" id="GO:0000028">
    <property type="term" value="P:ribosomal small subunit assembly"/>
    <property type="evidence" value="ECO:0007669"/>
    <property type="project" value="TreeGrafter"/>
</dbReference>
<dbReference type="GO" id="GO:0006412">
    <property type="term" value="P:translation"/>
    <property type="evidence" value="ECO:0007669"/>
    <property type="project" value="UniProtKB-UniRule"/>
</dbReference>
<dbReference type="FunFam" id="3.30.860.10:FF:000001">
    <property type="entry name" value="30S ribosomal protein S19"/>
    <property type="match status" value="1"/>
</dbReference>
<dbReference type="Gene3D" id="3.30.860.10">
    <property type="entry name" value="30s Ribosomal Protein S19, Chain A"/>
    <property type="match status" value="1"/>
</dbReference>
<dbReference type="HAMAP" id="MF_00531">
    <property type="entry name" value="Ribosomal_uS19"/>
    <property type="match status" value="1"/>
</dbReference>
<dbReference type="InterPro" id="IPR002222">
    <property type="entry name" value="Ribosomal_uS19"/>
</dbReference>
<dbReference type="InterPro" id="IPR005732">
    <property type="entry name" value="Ribosomal_uS19_bac-type"/>
</dbReference>
<dbReference type="InterPro" id="IPR020934">
    <property type="entry name" value="Ribosomal_uS19_CS"/>
</dbReference>
<dbReference type="InterPro" id="IPR023575">
    <property type="entry name" value="Ribosomal_uS19_SF"/>
</dbReference>
<dbReference type="NCBIfam" id="TIGR01050">
    <property type="entry name" value="rpsS_bact"/>
    <property type="match status" value="1"/>
</dbReference>
<dbReference type="PANTHER" id="PTHR11880">
    <property type="entry name" value="RIBOSOMAL PROTEIN S19P FAMILY MEMBER"/>
    <property type="match status" value="1"/>
</dbReference>
<dbReference type="PANTHER" id="PTHR11880:SF8">
    <property type="entry name" value="SMALL RIBOSOMAL SUBUNIT PROTEIN US19M"/>
    <property type="match status" value="1"/>
</dbReference>
<dbReference type="Pfam" id="PF00203">
    <property type="entry name" value="Ribosomal_S19"/>
    <property type="match status" value="1"/>
</dbReference>
<dbReference type="PIRSF" id="PIRSF002144">
    <property type="entry name" value="Ribosomal_S19"/>
    <property type="match status" value="1"/>
</dbReference>
<dbReference type="PRINTS" id="PR00975">
    <property type="entry name" value="RIBOSOMALS19"/>
</dbReference>
<dbReference type="SUPFAM" id="SSF54570">
    <property type="entry name" value="Ribosomal protein S19"/>
    <property type="match status" value="1"/>
</dbReference>
<dbReference type="PROSITE" id="PS00323">
    <property type="entry name" value="RIBOSOMAL_S19"/>
    <property type="match status" value="1"/>
</dbReference>
<accession>A0QSD5</accession>
<accession>I7FY83</accession>
<gene>
    <name evidence="1" type="primary">rpsS</name>
    <name type="ordered locus">MSMEG_1440</name>
    <name type="ordered locus">MSMEI_1404</name>
</gene>
<keyword id="KW-0002">3D-structure</keyword>
<keyword id="KW-1185">Reference proteome</keyword>
<keyword id="KW-0687">Ribonucleoprotein</keyword>
<keyword id="KW-0689">Ribosomal protein</keyword>
<keyword id="KW-0694">RNA-binding</keyword>
<keyword id="KW-0699">rRNA-binding</keyword>
<organism>
    <name type="scientific">Mycolicibacterium smegmatis (strain ATCC 700084 / mc(2)155)</name>
    <name type="common">Mycobacterium smegmatis</name>
    <dbReference type="NCBI Taxonomy" id="246196"/>
    <lineage>
        <taxon>Bacteria</taxon>
        <taxon>Bacillati</taxon>
        <taxon>Actinomycetota</taxon>
        <taxon>Actinomycetes</taxon>
        <taxon>Mycobacteriales</taxon>
        <taxon>Mycobacteriaceae</taxon>
        <taxon>Mycolicibacterium</taxon>
    </lineage>
</organism>
<proteinExistence type="evidence at protein level"/>
<evidence type="ECO:0000255" key="1">
    <source>
        <dbReference type="HAMAP-Rule" id="MF_00531"/>
    </source>
</evidence>
<evidence type="ECO:0000305" key="2"/>
<evidence type="ECO:0007829" key="3">
    <source>
        <dbReference type="PDB" id="5XYU"/>
    </source>
</evidence>
<sequence>MPRSLKKGPFVDDHLLKKVDVQNEKNTKQVIKTWSRRSTIIPDFIGHTFAVHDGRKHVPVFVTEAMVGHKLGEFAPTRTFKGHIKDDRKSKRR</sequence>
<reference key="1">
    <citation type="submission" date="2006-10" db="EMBL/GenBank/DDBJ databases">
        <authorList>
            <person name="Fleischmann R.D."/>
            <person name="Dodson R.J."/>
            <person name="Haft D.H."/>
            <person name="Merkel J.S."/>
            <person name="Nelson W.C."/>
            <person name="Fraser C.M."/>
        </authorList>
    </citation>
    <scope>NUCLEOTIDE SEQUENCE [LARGE SCALE GENOMIC DNA]</scope>
    <source>
        <strain>ATCC 700084 / mc(2)155</strain>
    </source>
</reference>
<reference key="2">
    <citation type="journal article" date="2007" name="Genome Biol.">
        <title>Interrupted coding sequences in Mycobacterium smegmatis: authentic mutations or sequencing errors?</title>
        <authorList>
            <person name="Deshayes C."/>
            <person name="Perrodou E."/>
            <person name="Gallien S."/>
            <person name="Euphrasie D."/>
            <person name="Schaeffer C."/>
            <person name="Van-Dorsselaer A."/>
            <person name="Poch O."/>
            <person name="Lecompte O."/>
            <person name="Reyrat J.-M."/>
        </authorList>
    </citation>
    <scope>NUCLEOTIDE SEQUENCE [LARGE SCALE GENOMIC DNA]</scope>
    <source>
        <strain>ATCC 700084 / mc(2)155</strain>
    </source>
</reference>
<reference key="3">
    <citation type="journal article" date="2009" name="Genome Res.">
        <title>Ortho-proteogenomics: multiple proteomes investigation through orthology and a new MS-based protocol.</title>
        <authorList>
            <person name="Gallien S."/>
            <person name="Perrodou E."/>
            <person name="Carapito C."/>
            <person name="Deshayes C."/>
            <person name="Reyrat J.-M."/>
            <person name="Van Dorsselaer A."/>
            <person name="Poch O."/>
            <person name="Schaeffer C."/>
            <person name="Lecompte O."/>
        </authorList>
    </citation>
    <scope>NUCLEOTIDE SEQUENCE [LARGE SCALE GENOMIC DNA]</scope>
    <source>
        <strain>ATCC 700084 / mc(2)155</strain>
    </source>
</reference>
<name>RS19_MYCS2</name>